<comment type="function">
    <text evidence="1">Required for pre-mRNA splicing as component of the activated spliceosome. May have a scaffolding role in the spliceosome assembly as it contacts all other components of the core complex.</text>
</comment>
<comment type="subunit">
    <text evidence="1">Component of the pre-catalytic and catalytic spliceosome complexes. Component of the postcatalytic spliceosome P complex.</text>
</comment>
<comment type="subcellular location">
    <subcellularLocation>
        <location evidence="1">Nucleus</location>
    </subcellularLocation>
</comment>
<comment type="similarity">
    <text evidence="3">Belongs to the SPF27 family.</text>
</comment>
<organism>
    <name type="scientific">Xenopus tropicalis</name>
    <name type="common">Western clawed frog</name>
    <name type="synonym">Silurana tropicalis</name>
    <dbReference type="NCBI Taxonomy" id="8364"/>
    <lineage>
        <taxon>Eukaryota</taxon>
        <taxon>Metazoa</taxon>
        <taxon>Chordata</taxon>
        <taxon>Craniata</taxon>
        <taxon>Vertebrata</taxon>
        <taxon>Euteleostomi</taxon>
        <taxon>Amphibia</taxon>
        <taxon>Batrachia</taxon>
        <taxon>Anura</taxon>
        <taxon>Pipoidea</taxon>
        <taxon>Pipidae</taxon>
        <taxon>Xenopodinae</taxon>
        <taxon>Xenopus</taxon>
        <taxon>Silurana</taxon>
    </lineage>
</organism>
<feature type="chain" id="PRO_0000064864" description="Pre-mRNA-splicing factor SPF27">
    <location>
        <begin position="1"/>
        <end position="223"/>
    </location>
</feature>
<feature type="coiled-coil region" evidence="2">
    <location>
        <begin position="139"/>
        <end position="223"/>
    </location>
</feature>
<dbReference type="EMBL" id="CR760253">
    <property type="protein sequence ID" value="CAJ83069.1"/>
    <property type="molecule type" value="mRNA"/>
</dbReference>
<dbReference type="EMBL" id="BC059752">
    <property type="protein sequence ID" value="AAH59752.1"/>
    <property type="molecule type" value="mRNA"/>
</dbReference>
<dbReference type="RefSeq" id="NP_988924.1">
    <property type="nucleotide sequence ID" value="NM_203593.1"/>
</dbReference>
<dbReference type="SMR" id="Q6PBE2"/>
<dbReference type="FunCoup" id="Q6PBE2">
    <property type="interactions" value="2521"/>
</dbReference>
<dbReference type="STRING" id="8364.ENSXETP00000043913"/>
<dbReference type="MoonProt" id="Q6PBE2"/>
<dbReference type="PaxDb" id="8364-ENSXETP00000060198"/>
<dbReference type="DNASU" id="394520"/>
<dbReference type="GeneID" id="394520"/>
<dbReference type="KEGG" id="xtr:394520"/>
<dbReference type="AGR" id="Xenbase:XB-GENE-959514"/>
<dbReference type="CTD" id="10286"/>
<dbReference type="Xenbase" id="XB-GENE-959514">
    <property type="gene designation" value="bcas2"/>
</dbReference>
<dbReference type="eggNOG" id="KOG3096">
    <property type="taxonomic scope" value="Eukaryota"/>
</dbReference>
<dbReference type="InParanoid" id="Q6PBE2"/>
<dbReference type="OMA" id="SAWQESI"/>
<dbReference type="OrthoDB" id="205794at2759"/>
<dbReference type="Reactome" id="R-XTR-72163">
    <property type="pathway name" value="mRNA Splicing - Major Pathway"/>
</dbReference>
<dbReference type="Proteomes" id="UP000008143">
    <property type="component" value="Chromosome 6"/>
</dbReference>
<dbReference type="GO" id="GO:0005634">
    <property type="term" value="C:nucleus"/>
    <property type="evidence" value="ECO:0000250"/>
    <property type="project" value="UniProtKB"/>
</dbReference>
<dbReference type="GO" id="GO:0071007">
    <property type="term" value="C:U2-type catalytic step 2 spliceosome"/>
    <property type="evidence" value="ECO:0000250"/>
    <property type="project" value="UniProtKB"/>
</dbReference>
<dbReference type="GO" id="GO:0000398">
    <property type="term" value="P:mRNA splicing, via spliceosome"/>
    <property type="evidence" value="ECO:0000250"/>
    <property type="project" value="UniProtKB"/>
</dbReference>
<dbReference type="InterPro" id="IPR008409">
    <property type="entry name" value="SPF27"/>
</dbReference>
<dbReference type="PANTHER" id="PTHR13296">
    <property type="entry name" value="BCAS2 PROTEIN"/>
    <property type="match status" value="1"/>
</dbReference>
<dbReference type="PANTHER" id="PTHR13296:SF0">
    <property type="entry name" value="PRE-MRNA-SPLICING FACTOR SPF27"/>
    <property type="match status" value="1"/>
</dbReference>
<dbReference type="Pfam" id="PF05700">
    <property type="entry name" value="BCAS2"/>
    <property type="match status" value="1"/>
</dbReference>
<reference key="1">
    <citation type="submission" date="2006-03" db="EMBL/GenBank/DDBJ databases">
        <authorList>
            <consortium name="Sanger Xenopus tropicalis EST/cDNA project"/>
        </authorList>
    </citation>
    <scope>NUCLEOTIDE SEQUENCE [LARGE SCALE MRNA]</scope>
    <source>
        <tissue>Neurula</tissue>
    </source>
</reference>
<reference key="2">
    <citation type="submission" date="2003-10" db="EMBL/GenBank/DDBJ databases">
        <authorList>
            <consortium name="NIH - Xenopus Gene Collection (XGC) project"/>
        </authorList>
    </citation>
    <scope>NUCLEOTIDE SEQUENCE [LARGE SCALE MRNA]</scope>
    <source>
        <tissue>Embryo</tissue>
    </source>
</reference>
<name>SPF27_XENTR</name>
<accession>Q6PBE2</accession>
<accession>Q28IS3</accession>
<gene>
    <name type="primary">bcas2</name>
    <name type="ORF">TNeu112e09.1</name>
</gene>
<keyword id="KW-0175">Coiled coil</keyword>
<keyword id="KW-0507">mRNA processing</keyword>
<keyword id="KW-0508">mRNA splicing</keyword>
<keyword id="KW-0539">Nucleus</keyword>
<keyword id="KW-1185">Reference proteome</keyword>
<keyword id="KW-0747">Spliceosome</keyword>
<proteinExistence type="evidence at transcript level"/>
<protein>
    <recommendedName>
        <fullName>Pre-mRNA-splicing factor SPF27</fullName>
    </recommendedName>
    <alternativeName>
        <fullName>Protein BCAS2 homolog</fullName>
    </alternativeName>
</protein>
<evidence type="ECO:0000250" key="1">
    <source>
        <dbReference type="UniProtKB" id="O75934"/>
    </source>
</evidence>
<evidence type="ECO:0000255" key="2"/>
<evidence type="ECO:0000305" key="3"/>
<sequence>MAGTSLVAGDVVVDALPYFDQGYDAQGVREAAAALVEEETRRYRPTKNYLSYLPTPDYSAFETEIMRNEFERLSSRQPLELLSMKRYELPAPLSGQRNDITAWQECVNNSMAQLEHQAVRIENLELMSQHGCNAWKVYNENLLHMIDCAQKDLQKLRKKIQDLNWQRKNSQLTAGARLREMESTWVSLVSKNYEIERAIVQMENEVYQLKERSGENKENIEDY</sequence>